<keyword id="KW-0963">Cytoplasm</keyword>
<keyword id="KW-0489">Methyltransferase</keyword>
<keyword id="KW-1185">Reference proteome</keyword>
<keyword id="KW-0949">S-adenosyl-L-methionine</keyword>
<keyword id="KW-0808">Transferase</keyword>
<organism>
    <name type="scientific">Polaromonas sp. (strain JS666 / ATCC BAA-500)</name>
    <dbReference type="NCBI Taxonomy" id="296591"/>
    <lineage>
        <taxon>Bacteria</taxon>
        <taxon>Pseudomonadati</taxon>
        <taxon>Pseudomonadota</taxon>
        <taxon>Betaproteobacteria</taxon>
        <taxon>Burkholderiales</taxon>
        <taxon>Comamonadaceae</taxon>
        <taxon>Polaromonas</taxon>
    </lineage>
</organism>
<evidence type="ECO:0000255" key="1">
    <source>
        <dbReference type="HAMAP-Rule" id="MF_00090"/>
    </source>
</evidence>
<comment type="function">
    <text evidence="1">Catalyzes the methyl esterification of L-isoaspartyl residues in peptides and proteins that result from spontaneous decomposition of normal L-aspartyl and L-asparaginyl residues. It plays a role in the repair and/or degradation of damaged proteins.</text>
</comment>
<comment type="catalytic activity">
    <reaction evidence="1">
        <text>[protein]-L-isoaspartate + S-adenosyl-L-methionine = [protein]-L-isoaspartate alpha-methyl ester + S-adenosyl-L-homocysteine</text>
        <dbReference type="Rhea" id="RHEA:12705"/>
        <dbReference type="Rhea" id="RHEA-COMP:12143"/>
        <dbReference type="Rhea" id="RHEA-COMP:12144"/>
        <dbReference type="ChEBI" id="CHEBI:57856"/>
        <dbReference type="ChEBI" id="CHEBI:59789"/>
        <dbReference type="ChEBI" id="CHEBI:90596"/>
        <dbReference type="ChEBI" id="CHEBI:90598"/>
        <dbReference type="EC" id="2.1.1.77"/>
    </reaction>
</comment>
<comment type="subcellular location">
    <subcellularLocation>
        <location evidence="1">Cytoplasm</location>
    </subcellularLocation>
</comment>
<comment type="similarity">
    <text evidence="1">Belongs to the methyltransferase superfamily. L-isoaspartyl/D-aspartyl protein methyltransferase family.</text>
</comment>
<dbReference type="EC" id="2.1.1.77" evidence="1"/>
<dbReference type="EMBL" id="CP000316">
    <property type="protein sequence ID" value="ABE46170.1"/>
    <property type="molecule type" value="Genomic_DNA"/>
</dbReference>
<dbReference type="SMR" id="Q123X2"/>
<dbReference type="STRING" id="296591.Bpro_4278"/>
<dbReference type="KEGG" id="pol:Bpro_4278"/>
<dbReference type="eggNOG" id="COG2518">
    <property type="taxonomic scope" value="Bacteria"/>
</dbReference>
<dbReference type="HOGENOM" id="CLU_055432_2_0_4"/>
<dbReference type="OrthoDB" id="9810066at2"/>
<dbReference type="Proteomes" id="UP000001983">
    <property type="component" value="Chromosome"/>
</dbReference>
<dbReference type="GO" id="GO:0005737">
    <property type="term" value="C:cytoplasm"/>
    <property type="evidence" value="ECO:0007669"/>
    <property type="project" value="UniProtKB-SubCell"/>
</dbReference>
<dbReference type="GO" id="GO:0004719">
    <property type="term" value="F:protein-L-isoaspartate (D-aspartate) O-methyltransferase activity"/>
    <property type="evidence" value="ECO:0007669"/>
    <property type="project" value="UniProtKB-UniRule"/>
</dbReference>
<dbReference type="GO" id="GO:0032259">
    <property type="term" value="P:methylation"/>
    <property type="evidence" value="ECO:0007669"/>
    <property type="project" value="UniProtKB-KW"/>
</dbReference>
<dbReference type="GO" id="GO:0036211">
    <property type="term" value="P:protein modification process"/>
    <property type="evidence" value="ECO:0007669"/>
    <property type="project" value="UniProtKB-UniRule"/>
</dbReference>
<dbReference type="GO" id="GO:0030091">
    <property type="term" value="P:protein repair"/>
    <property type="evidence" value="ECO:0007669"/>
    <property type="project" value="UniProtKB-UniRule"/>
</dbReference>
<dbReference type="CDD" id="cd02440">
    <property type="entry name" value="AdoMet_MTases"/>
    <property type="match status" value="1"/>
</dbReference>
<dbReference type="FunFam" id="3.40.50.150:FF:000010">
    <property type="entry name" value="Protein-L-isoaspartate O-methyltransferase"/>
    <property type="match status" value="1"/>
</dbReference>
<dbReference type="Gene3D" id="3.40.50.150">
    <property type="entry name" value="Vaccinia Virus protein VP39"/>
    <property type="match status" value="1"/>
</dbReference>
<dbReference type="HAMAP" id="MF_00090">
    <property type="entry name" value="PIMT"/>
    <property type="match status" value="1"/>
</dbReference>
<dbReference type="InterPro" id="IPR000682">
    <property type="entry name" value="PCMT"/>
</dbReference>
<dbReference type="InterPro" id="IPR029063">
    <property type="entry name" value="SAM-dependent_MTases_sf"/>
</dbReference>
<dbReference type="NCBIfam" id="TIGR00080">
    <property type="entry name" value="pimt"/>
    <property type="match status" value="1"/>
</dbReference>
<dbReference type="NCBIfam" id="NF001453">
    <property type="entry name" value="PRK00312.1"/>
    <property type="match status" value="1"/>
</dbReference>
<dbReference type="PANTHER" id="PTHR11579">
    <property type="entry name" value="PROTEIN-L-ISOASPARTATE O-METHYLTRANSFERASE"/>
    <property type="match status" value="1"/>
</dbReference>
<dbReference type="PANTHER" id="PTHR11579:SF0">
    <property type="entry name" value="PROTEIN-L-ISOASPARTATE(D-ASPARTATE) O-METHYLTRANSFERASE"/>
    <property type="match status" value="1"/>
</dbReference>
<dbReference type="Pfam" id="PF01135">
    <property type="entry name" value="PCMT"/>
    <property type="match status" value="1"/>
</dbReference>
<dbReference type="SUPFAM" id="SSF53335">
    <property type="entry name" value="S-adenosyl-L-methionine-dependent methyltransferases"/>
    <property type="match status" value="1"/>
</dbReference>
<dbReference type="PROSITE" id="PS01279">
    <property type="entry name" value="PCMT"/>
    <property type="match status" value="1"/>
</dbReference>
<accession>Q123X2</accession>
<name>PIMT2_POLSJ</name>
<feature type="chain" id="PRO_0000351902" description="Protein-L-isoaspartate O-methyltransferase 2">
    <location>
        <begin position="1"/>
        <end position="211"/>
    </location>
</feature>
<feature type="active site" evidence="1">
    <location>
        <position position="61"/>
    </location>
</feature>
<protein>
    <recommendedName>
        <fullName evidence="1">Protein-L-isoaspartate O-methyltransferase 2</fullName>
        <ecNumber evidence="1">2.1.1.77</ecNumber>
    </recommendedName>
    <alternativeName>
        <fullName evidence="1">L-isoaspartyl protein carboxyl methyltransferase 2</fullName>
    </alternativeName>
    <alternativeName>
        <fullName evidence="1">Protein L-isoaspartyl methyltransferase 2</fullName>
    </alternativeName>
    <alternativeName>
        <fullName evidence="1">Protein-beta-aspartate methyltransferase 2</fullName>
        <shortName evidence="1">PIMT 2</shortName>
    </alternativeName>
</protein>
<proteinExistence type="inferred from homology"/>
<reference key="1">
    <citation type="journal article" date="2008" name="Appl. Environ. Microbiol.">
        <title>The genome of Polaromonas sp. strain JS666: insights into the evolution of a hydrocarbon- and xenobiotic-degrading bacterium, and features of relevance to biotechnology.</title>
        <authorList>
            <person name="Mattes T.E."/>
            <person name="Alexander A.K."/>
            <person name="Richardson P.M."/>
            <person name="Munk A.C."/>
            <person name="Han C.S."/>
            <person name="Stothard P."/>
            <person name="Coleman N.V."/>
        </authorList>
    </citation>
    <scope>NUCLEOTIDE SEQUENCE [LARGE SCALE GENOMIC DNA]</scope>
    <source>
        <strain>JS666 / ATCC BAA-500</strain>
    </source>
</reference>
<gene>
    <name evidence="1" type="primary">pcm2</name>
    <name type="ordered locus">Bpro_4278</name>
</gene>
<sequence>MMEEITALVRETRTETGKPALDERVMAVMGKVPRHEFVPADQLPRAYQNRPLPIGHGQTISQPYIVALMTDLARVEPGHKVLEVGTGSGYQAAVMAHLARAVYTIEIIEPLGLQARQRLQKLGYDNVQVRLGDGYHGWEEHAPYDAILVTAAASHIPPPLIRQLKAGGRMVIPVGAAFMVQQLMLVEKNRDGTVSTRQILPVAFVPLTGQR</sequence>